<comment type="function">
    <text evidence="1">Catalyzes the reversible reaction in which hydroxymethyl group from 5,10-methylenetetrahydrofolate is transferred onto alpha-ketoisovalerate to form ketopantoate.</text>
</comment>
<comment type="catalytic activity">
    <reaction evidence="1">
        <text>3-methyl-2-oxobutanoate + (6R)-5,10-methylene-5,6,7,8-tetrahydrofolate + H2O = 2-dehydropantoate + (6S)-5,6,7,8-tetrahydrofolate</text>
        <dbReference type="Rhea" id="RHEA:11824"/>
        <dbReference type="ChEBI" id="CHEBI:11561"/>
        <dbReference type="ChEBI" id="CHEBI:11851"/>
        <dbReference type="ChEBI" id="CHEBI:15377"/>
        <dbReference type="ChEBI" id="CHEBI:15636"/>
        <dbReference type="ChEBI" id="CHEBI:57453"/>
        <dbReference type="EC" id="2.1.2.11"/>
    </reaction>
</comment>
<comment type="cofactor">
    <cofactor evidence="1">
        <name>Mg(2+)</name>
        <dbReference type="ChEBI" id="CHEBI:18420"/>
    </cofactor>
    <text evidence="1">Binds 1 Mg(2+) ion per subunit.</text>
</comment>
<comment type="pathway">
    <text evidence="1">Cofactor biosynthesis; (R)-pantothenate biosynthesis; (R)-pantoate from 3-methyl-2-oxobutanoate: step 1/2.</text>
</comment>
<comment type="subunit">
    <text evidence="1">Homodecamer; pentamer of dimers.</text>
</comment>
<comment type="subcellular location">
    <subcellularLocation>
        <location evidence="1">Cytoplasm</location>
    </subcellularLocation>
</comment>
<comment type="similarity">
    <text evidence="1">Belongs to the PanB family.</text>
</comment>
<evidence type="ECO:0000255" key="1">
    <source>
        <dbReference type="HAMAP-Rule" id="MF_00156"/>
    </source>
</evidence>
<dbReference type="EC" id="2.1.2.11" evidence="1"/>
<dbReference type="EMBL" id="CP000572">
    <property type="protein sequence ID" value="ABN90372.1"/>
    <property type="molecule type" value="Genomic_DNA"/>
</dbReference>
<dbReference type="RefSeq" id="WP_004194137.1">
    <property type="nucleotide sequence ID" value="NC_009076.1"/>
</dbReference>
<dbReference type="SMR" id="A3NYX3"/>
<dbReference type="GeneID" id="93061412"/>
<dbReference type="KEGG" id="bpl:BURPS1106A_3307"/>
<dbReference type="HOGENOM" id="CLU_036645_1_0_4"/>
<dbReference type="UniPathway" id="UPA00028">
    <property type="reaction ID" value="UER00003"/>
</dbReference>
<dbReference type="Proteomes" id="UP000006738">
    <property type="component" value="Chromosome I"/>
</dbReference>
<dbReference type="GO" id="GO:0005737">
    <property type="term" value="C:cytoplasm"/>
    <property type="evidence" value="ECO:0007669"/>
    <property type="project" value="UniProtKB-SubCell"/>
</dbReference>
<dbReference type="GO" id="GO:0003864">
    <property type="term" value="F:3-methyl-2-oxobutanoate hydroxymethyltransferase activity"/>
    <property type="evidence" value="ECO:0007669"/>
    <property type="project" value="UniProtKB-UniRule"/>
</dbReference>
<dbReference type="GO" id="GO:0000287">
    <property type="term" value="F:magnesium ion binding"/>
    <property type="evidence" value="ECO:0007669"/>
    <property type="project" value="TreeGrafter"/>
</dbReference>
<dbReference type="GO" id="GO:0015940">
    <property type="term" value="P:pantothenate biosynthetic process"/>
    <property type="evidence" value="ECO:0007669"/>
    <property type="project" value="UniProtKB-UniRule"/>
</dbReference>
<dbReference type="CDD" id="cd06557">
    <property type="entry name" value="KPHMT-like"/>
    <property type="match status" value="1"/>
</dbReference>
<dbReference type="FunFam" id="3.20.20.60:FF:000003">
    <property type="entry name" value="3-methyl-2-oxobutanoate hydroxymethyltransferase"/>
    <property type="match status" value="1"/>
</dbReference>
<dbReference type="Gene3D" id="3.20.20.60">
    <property type="entry name" value="Phosphoenolpyruvate-binding domains"/>
    <property type="match status" value="1"/>
</dbReference>
<dbReference type="HAMAP" id="MF_00156">
    <property type="entry name" value="PanB"/>
    <property type="match status" value="1"/>
</dbReference>
<dbReference type="InterPro" id="IPR003700">
    <property type="entry name" value="Pantoate_hydroxy_MeTrfase"/>
</dbReference>
<dbReference type="InterPro" id="IPR015813">
    <property type="entry name" value="Pyrv/PenolPyrv_kinase-like_dom"/>
</dbReference>
<dbReference type="InterPro" id="IPR040442">
    <property type="entry name" value="Pyrv_kinase-like_dom_sf"/>
</dbReference>
<dbReference type="NCBIfam" id="TIGR00222">
    <property type="entry name" value="panB"/>
    <property type="match status" value="1"/>
</dbReference>
<dbReference type="NCBIfam" id="NF001452">
    <property type="entry name" value="PRK00311.1"/>
    <property type="match status" value="1"/>
</dbReference>
<dbReference type="PANTHER" id="PTHR20881">
    <property type="entry name" value="3-METHYL-2-OXOBUTANOATE HYDROXYMETHYLTRANSFERASE"/>
    <property type="match status" value="1"/>
</dbReference>
<dbReference type="PANTHER" id="PTHR20881:SF0">
    <property type="entry name" value="3-METHYL-2-OXOBUTANOATE HYDROXYMETHYLTRANSFERASE"/>
    <property type="match status" value="1"/>
</dbReference>
<dbReference type="Pfam" id="PF02548">
    <property type="entry name" value="Pantoate_transf"/>
    <property type="match status" value="1"/>
</dbReference>
<dbReference type="PIRSF" id="PIRSF000388">
    <property type="entry name" value="Pantoate_hydroxy_MeTrfase"/>
    <property type="match status" value="1"/>
</dbReference>
<dbReference type="SUPFAM" id="SSF51621">
    <property type="entry name" value="Phosphoenolpyruvate/pyruvate domain"/>
    <property type="match status" value="1"/>
</dbReference>
<name>PANB_BURP0</name>
<reference key="1">
    <citation type="journal article" date="2010" name="Genome Biol. Evol.">
        <title>Continuing evolution of Burkholderia mallei through genome reduction and large-scale rearrangements.</title>
        <authorList>
            <person name="Losada L."/>
            <person name="Ronning C.M."/>
            <person name="DeShazer D."/>
            <person name="Woods D."/>
            <person name="Fedorova N."/>
            <person name="Kim H.S."/>
            <person name="Shabalina S.A."/>
            <person name="Pearson T.R."/>
            <person name="Brinkac L."/>
            <person name="Tan P."/>
            <person name="Nandi T."/>
            <person name="Crabtree J."/>
            <person name="Badger J."/>
            <person name="Beckstrom-Sternberg S."/>
            <person name="Saqib M."/>
            <person name="Schutzer S.E."/>
            <person name="Keim P."/>
            <person name="Nierman W.C."/>
        </authorList>
    </citation>
    <scope>NUCLEOTIDE SEQUENCE [LARGE SCALE GENOMIC DNA]</scope>
    <source>
        <strain>1106a</strain>
    </source>
</reference>
<keyword id="KW-0963">Cytoplasm</keyword>
<keyword id="KW-0460">Magnesium</keyword>
<keyword id="KW-0479">Metal-binding</keyword>
<keyword id="KW-0566">Pantothenate biosynthesis</keyword>
<keyword id="KW-0808">Transferase</keyword>
<organism>
    <name type="scientific">Burkholderia pseudomallei (strain 1106a)</name>
    <dbReference type="NCBI Taxonomy" id="357348"/>
    <lineage>
        <taxon>Bacteria</taxon>
        <taxon>Pseudomonadati</taxon>
        <taxon>Pseudomonadota</taxon>
        <taxon>Betaproteobacteria</taxon>
        <taxon>Burkholderiales</taxon>
        <taxon>Burkholderiaceae</taxon>
        <taxon>Burkholderia</taxon>
        <taxon>pseudomallei group</taxon>
    </lineage>
</organism>
<proteinExistence type="inferred from homology"/>
<accession>A3NYX3</accession>
<feature type="chain" id="PRO_0000297233" description="3-methyl-2-oxobutanoate hydroxymethyltransferase">
    <location>
        <begin position="1"/>
        <end position="271"/>
    </location>
</feature>
<feature type="active site" description="Proton acceptor" evidence="1">
    <location>
        <position position="189"/>
    </location>
</feature>
<feature type="binding site" evidence="1">
    <location>
        <begin position="53"/>
        <end position="54"/>
    </location>
    <ligand>
        <name>3-methyl-2-oxobutanoate</name>
        <dbReference type="ChEBI" id="CHEBI:11851"/>
    </ligand>
</feature>
<feature type="binding site" evidence="1">
    <location>
        <position position="53"/>
    </location>
    <ligand>
        <name>Mg(2+)</name>
        <dbReference type="ChEBI" id="CHEBI:18420"/>
    </ligand>
</feature>
<feature type="binding site" evidence="1">
    <location>
        <position position="92"/>
    </location>
    <ligand>
        <name>3-methyl-2-oxobutanoate</name>
        <dbReference type="ChEBI" id="CHEBI:11851"/>
    </ligand>
</feature>
<feature type="binding site" evidence="1">
    <location>
        <position position="92"/>
    </location>
    <ligand>
        <name>Mg(2+)</name>
        <dbReference type="ChEBI" id="CHEBI:18420"/>
    </ligand>
</feature>
<feature type="binding site" evidence="1">
    <location>
        <position position="120"/>
    </location>
    <ligand>
        <name>3-methyl-2-oxobutanoate</name>
        <dbReference type="ChEBI" id="CHEBI:11851"/>
    </ligand>
</feature>
<feature type="binding site" evidence="1">
    <location>
        <position position="122"/>
    </location>
    <ligand>
        <name>Mg(2+)</name>
        <dbReference type="ChEBI" id="CHEBI:18420"/>
    </ligand>
</feature>
<sequence>MTYLQESSRPAVTVPKLQAMREAGEKIAMLTSYDASFAALLDRANVDVQLIGDSLGNVLQGQATTLPVTLDDIAYHTACVARAQPRGLVVADLPFGTYGTPADAFASAVKLMRAGAQMVKLEGGEWLAETVRFLVERAVPVCAHVGLTPQSVHAFGGFKVQGKTEAGAAQLLRDARAVEEAGAQLIVLEAVPTLVAAEVTRELSIPTIGIGAGAECSGQVLVLHDMLGVFPGKRPRFVKDFMQGQPSIFAAVEAYVRAVKDGSFPGPEHSF</sequence>
<protein>
    <recommendedName>
        <fullName evidence="1">3-methyl-2-oxobutanoate hydroxymethyltransferase</fullName>
        <ecNumber evidence="1">2.1.2.11</ecNumber>
    </recommendedName>
    <alternativeName>
        <fullName evidence="1">Ketopantoate hydroxymethyltransferase</fullName>
        <shortName evidence="1">KPHMT</shortName>
    </alternativeName>
</protein>
<gene>
    <name evidence="1" type="primary">panB</name>
    <name type="ordered locus">BURPS1106A_3307</name>
</gene>